<proteinExistence type="inferred from homology"/>
<comment type="function">
    <text evidence="1 5">Endo-1,4-beta-xylanase involved in the hydrolysis of xylan, a major structural heterogeneous polysaccharide found in plant biomass representing the second most abundant polysaccharide in the biosphere, after cellulose (By similarity). May act as an elicitor of plant defense responses in certain plants but does not exhibit any cell death when transiently expressed in N.benthamiana (PubMed:33205907).</text>
</comment>
<comment type="catalytic activity">
    <reaction evidence="4">
        <text>Endohydrolysis of (1-&gt;4)-beta-D-xylosidic linkages in xylans.</text>
        <dbReference type="EC" id="3.2.1.8"/>
    </reaction>
</comment>
<comment type="pathway">
    <text evidence="4">Glycan degradation; xylan degradation.</text>
</comment>
<comment type="similarity">
    <text evidence="4">Belongs to the glycosyl hydrolase 11 (cellulase G) family.</text>
</comment>
<name>EIX2_BOTFB</name>
<organism>
    <name type="scientific">Botryotinia fuckeliana (strain B05.10)</name>
    <name type="common">Noble rot fungus</name>
    <name type="synonym">Botrytis cinerea</name>
    <dbReference type="NCBI Taxonomy" id="332648"/>
    <lineage>
        <taxon>Eukaryota</taxon>
        <taxon>Fungi</taxon>
        <taxon>Dikarya</taxon>
        <taxon>Ascomycota</taxon>
        <taxon>Pezizomycotina</taxon>
        <taxon>Leotiomycetes</taxon>
        <taxon>Helotiales</taxon>
        <taxon>Sclerotiniaceae</taxon>
        <taxon>Botrytis</taxon>
    </lineage>
</organism>
<gene>
    <name evidence="6" type="primary">EIX2</name>
    <name type="ORF">BCIN_15g01600</name>
</gene>
<protein>
    <recommendedName>
        <fullName evidence="6">Ethylene-inducing xylanase 2</fullName>
        <shortName evidence="6">EIX21</shortName>
        <ecNumber evidence="4">3.2.1.8</ecNumber>
    </recommendedName>
    <alternativeName>
        <fullName evidence="6">Endo-1,4-beta-xylanase EIX2</fullName>
    </alternativeName>
</protein>
<accession>A0A384K474</accession>
<keyword id="KW-0119">Carbohydrate metabolism</keyword>
<keyword id="KW-0325">Glycoprotein</keyword>
<keyword id="KW-0326">Glycosidase</keyword>
<keyword id="KW-0378">Hydrolase</keyword>
<keyword id="KW-0624">Polysaccharide degradation</keyword>
<keyword id="KW-1185">Reference proteome</keyword>
<keyword id="KW-0732">Signal</keyword>
<keyword id="KW-0858">Xylan degradation</keyword>
<sequence>MITFSSLLVTFSAISTSLAIPGSILPKRSPMNFVLQRNESSLVRRATPNYEQDYTTGGDVIYTPSGSSFTVDWSTEDDFVVGLGWTTGSTNPINFSGTFGIGSGTALLSIYGWSENPLVEYYIVEDSASPPSFGTVKGSVTSDGSSYTIWENQRVNEPSIVGTATFNQYISVRSSPRKSGTVTVENHFQAWAALGMNLGTLNYQVLAVEGWGGEGAATQTVS</sequence>
<dbReference type="EC" id="3.2.1.8" evidence="4"/>
<dbReference type="EMBL" id="CP009819">
    <property type="protein sequence ID" value="ATZ57598.1"/>
    <property type="molecule type" value="Genomic_DNA"/>
</dbReference>
<dbReference type="RefSeq" id="XP_001547954.1">
    <property type="nucleotide sequence ID" value="XM_001547904.2"/>
</dbReference>
<dbReference type="SMR" id="A0A384K474"/>
<dbReference type="EnsemblFungi" id="Bcin15g01600.1">
    <property type="protein sequence ID" value="Bcin15p01600.1"/>
    <property type="gene ID" value="Bcin15g01600"/>
</dbReference>
<dbReference type="GeneID" id="5428418"/>
<dbReference type="KEGG" id="bfu:BCIN_15g01600"/>
<dbReference type="VEuPathDB" id="FungiDB:Bcin15g01600"/>
<dbReference type="OMA" id="MEDNFAY"/>
<dbReference type="OrthoDB" id="2115822at2759"/>
<dbReference type="UniPathway" id="UPA00114"/>
<dbReference type="Proteomes" id="UP000001798">
    <property type="component" value="Chromosome bcin15"/>
</dbReference>
<dbReference type="GO" id="GO:0005576">
    <property type="term" value="C:extracellular region"/>
    <property type="evidence" value="ECO:0007669"/>
    <property type="project" value="UniProtKB-SubCell"/>
</dbReference>
<dbReference type="GO" id="GO:0031176">
    <property type="term" value="F:endo-1,4-beta-xylanase activity"/>
    <property type="evidence" value="ECO:0007669"/>
    <property type="project" value="UniProtKB-UniRule"/>
</dbReference>
<dbReference type="GO" id="GO:0045493">
    <property type="term" value="P:xylan catabolic process"/>
    <property type="evidence" value="ECO:0007669"/>
    <property type="project" value="UniProtKB-UniRule"/>
</dbReference>
<dbReference type="FunFam" id="2.60.120.180:FF:000002">
    <property type="entry name" value="Endo-1,4-beta-xylanase A"/>
    <property type="match status" value="1"/>
</dbReference>
<dbReference type="Gene3D" id="2.60.120.180">
    <property type="match status" value="1"/>
</dbReference>
<dbReference type="InterPro" id="IPR013320">
    <property type="entry name" value="ConA-like_dom_sf"/>
</dbReference>
<dbReference type="InterPro" id="IPR013319">
    <property type="entry name" value="GH11/12"/>
</dbReference>
<dbReference type="InterPro" id="IPR033123">
    <property type="entry name" value="GH11_dom"/>
</dbReference>
<dbReference type="InterPro" id="IPR001137">
    <property type="entry name" value="Glyco_hydro_11"/>
</dbReference>
<dbReference type="PANTHER" id="PTHR46828:SF4">
    <property type="entry name" value="ENDO-1,4-BETA-XYLANASE"/>
    <property type="match status" value="1"/>
</dbReference>
<dbReference type="PANTHER" id="PTHR46828">
    <property type="entry name" value="ENDO-1,4-BETA-XYLANASE A-RELATED"/>
    <property type="match status" value="1"/>
</dbReference>
<dbReference type="Pfam" id="PF00457">
    <property type="entry name" value="Glyco_hydro_11"/>
    <property type="match status" value="1"/>
</dbReference>
<dbReference type="PRINTS" id="PR00911">
    <property type="entry name" value="GLHYDRLASE11"/>
</dbReference>
<dbReference type="SUPFAM" id="SSF49899">
    <property type="entry name" value="Concanavalin A-like lectins/glucanases"/>
    <property type="match status" value="1"/>
</dbReference>
<dbReference type="PROSITE" id="PS51761">
    <property type="entry name" value="GH11_3"/>
    <property type="match status" value="1"/>
</dbReference>
<feature type="signal peptide" evidence="2">
    <location>
        <begin position="1"/>
        <end position="19"/>
    </location>
</feature>
<feature type="chain" id="PRO_5016822003" description="Ethylene-inducing xylanase 2">
    <location>
        <begin position="20"/>
        <end position="222"/>
    </location>
</feature>
<feature type="domain" description="GH11" evidence="4">
    <location>
        <begin position="36"/>
        <end position="222"/>
    </location>
</feature>
<feature type="active site" description="Nucleophile" evidence="4">
    <location>
        <position position="120"/>
    </location>
</feature>
<feature type="active site" description="Proton donor" evidence="4">
    <location>
        <position position="209"/>
    </location>
</feature>
<feature type="glycosylation site" description="N-linked (GlcNAc...) asparagine" evidence="3">
    <location>
        <position position="38"/>
    </location>
</feature>
<feature type="glycosylation site" description="N-linked (GlcNAc...) asparagine" evidence="3">
    <location>
        <position position="94"/>
    </location>
</feature>
<reference key="1">
    <citation type="journal article" date="2011" name="PLoS Genet.">
        <title>Genomic analysis of the necrotrophic fungal pathogens Sclerotinia sclerotiorum and Botrytis cinerea.</title>
        <authorList>
            <person name="Amselem J."/>
            <person name="Cuomo C.A."/>
            <person name="van Kan J.A.L."/>
            <person name="Viaud M."/>
            <person name="Benito E.P."/>
            <person name="Couloux A."/>
            <person name="Coutinho P.M."/>
            <person name="de Vries R.P."/>
            <person name="Dyer P.S."/>
            <person name="Fillinger S."/>
            <person name="Fournier E."/>
            <person name="Gout L."/>
            <person name="Hahn M."/>
            <person name="Kohn L."/>
            <person name="Lapalu N."/>
            <person name="Plummer K.M."/>
            <person name="Pradier J.-M."/>
            <person name="Quevillon E."/>
            <person name="Sharon A."/>
            <person name="Simon A."/>
            <person name="ten Have A."/>
            <person name="Tudzynski B."/>
            <person name="Tudzynski P."/>
            <person name="Wincker P."/>
            <person name="Andrew M."/>
            <person name="Anthouard V."/>
            <person name="Beever R.E."/>
            <person name="Beffa R."/>
            <person name="Benoit I."/>
            <person name="Bouzid O."/>
            <person name="Brault B."/>
            <person name="Chen Z."/>
            <person name="Choquer M."/>
            <person name="Collemare J."/>
            <person name="Cotton P."/>
            <person name="Danchin E.G."/>
            <person name="Da Silva C."/>
            <person name="Gautier A."/>
            <person name="Giraud C."/>
            <person name="Giraud T."/>
            <person name="Gonzalez C."/>
            <person name="Grossetete S."/>
            <person name="Gueldener U."/>
            <person name="Henrissat B."/>
            <person name="Howlett B.J."/>
            <person name="Kodira C."/>
            <person name="Kretschmer M."/>
            <person name="Lappartient A."/>
            <person name="Leroch M."/>
            <person name="Levis C."/>
            <person name="Mauceli E."/>
            <person name="Neuveglise C."/>
            <person name="Oeser B."/>
            <person name="Pearson M."/>
            <person name="Poulain J."/>
            <person name="Poussereau N."/>
            <person name="Quesneville H."/>
            <person name="Rascle C."/>
            <person name="Schumacher J."/>
            <person name="Segurens B."/>
            <person name="Sexton A."/>
            <person name="Silva E."/>
            <person name="Sirven C."/>
            <person name="Soanes D.M."/>
            <person name="Talbot N.J."/>
            <person name="Templeton M."/>
            <person name="Yandava C."/>
            <person name="Yarden O."/>
            <person name="Zeng Q."/>
            <person name="Rollins J.A."/>
            <person name="Lebrun M.-H."/>
            <person name="Dickman M."/>
        </authorList>
    </citation>
    <scope>NUCLEOTIDE SEQUENCE [LARGE SCALE GENOMIC DNA]</scope>
    <source>
        <strain>B05.10</strain>
    </source>
</reference>
<reference key="2">
    <citation type="journal article" date="2012" name="Eukaryot. Cell">
        <title>Genome update of Botrytis cinerea strains B05.10 and T4.</title>
        <authorList>
            <person name="Staats M."/>
            <person name="van Kan J.A.L."/>
        </authorList>
    </citation>
    <scope>NUCLEOTIDE SEQUENCE [LARGE SCALE GENOMIC DNA]</scope>
    <scope>GENOME REANNOTATION</scope>
    <source>
        <strain>B05.10</strain>
    </source>
</reference>
<reference key="3">
    <citation type="journal article" date="2017" name="Mol. Plant Pathol.">
        <title>A gapless genome sequence of the fungus Botrytis cinerea.</title>
        <authorList>
            <person name="van Kan J.A.L."/>
            <person name="Stassen J.H.M."/>
            <person name="Mosbach A."/>
            <person name="van der Lee T.A.J."/>
            <person name="Faino L."/>
            <person name="Farmer A.D."/>
            <person name="Papasotiriou D.G."/>
            <person name="Zhou S."/>
            <person name="Seidl M.F."/>
            <person name="Cottam E."/>
            <person name="Edel D."/>
            <person name="Hahn M."/>
            <person name="Schwartz D.C."/>
            <person name="Dietrich R.A."/>
            <person name="Widdison S."/>
            <person name="Scalliet G."/>
        </authorList>
    </citation>
    <scope>NUCLEOTIDE SEQUENCE [LARGE SCALE GENOMIC DNA]</scope>
    <scope>GENOME REANNOTATION</scope>
    <source>
        <strain>B05.10</strain>
    </source>
</reference>
<reference key="4">
    <citation type="journal article" date="2021" name="J. Integr. Plant Biol.">
        <title>Nicotiana benthamiana LRR-RLP NbEIX2 mediates the perception of an EIX-like protein from Verticillium dahliae.</title>
        <authorList>
            <person name="Yin Z."/>
            <person name="Wang N."/>
            <person name="Pi L."/>
            <person name="Li L."/>
            <person name="Duan W."/>
            <person name="Wang X."/>
            <person name="Dou D."/>
        </authorList>
    </citation>
    <scope>FUNCTION</scope>
</reference>
<evidence type="ECO:0000250" key="1">
    <source>
        <dbReference type="UniProtKB" id="B3VSG7"/>
    </source>
</evidence>
<evidence type="ECO:0000255" key="2"/>
<evidence type="ECO:0000255" key="3">
    <source>
        <dbReference type="PROSITE-ProRule" id="PRU00498"/>
    </source>
</evidence>
<evidence type="ECO:0000255" key="4">
    <source>
        <dbReference type="PROSITE-ProRule" id="PRU01097"/>
    </source>
</evidence>
<evidence type="ECO:0000269" key="5">
    <source>
    </source>
</evidence>
<evidence type="ECO:0000303" key="6">
    <source>
    </source>
</evidence>